<evidence type="ECO:0000250" key="1"/>
<evidence type="ECO:0000255" key="2">
    <source>
        <dbReference type="PROSITE-ProRule" id="PRU00981"/>
    </source>
</evidence>
<reference key="1">
    <citation type="submission" date="1996-01" db="EMBL/GenBank/DDBJ databases">
        <title>Myx: a novel interactor that also binds to a membrane serine threonine kinase receptor.</title>
        <authorList>
            <person name="Wang T."/>
            <person name="Li B."/>
            <person name="Danielson P."/>
            <person name="Wang Y."/>
            <person name="Zervos A.S."/>
            <person name="Haqq T."/>
            <person name="Rockwell S."/>
            <person name="Teixeira J."/>
            <person name="Donahoe P."/>
        </authorList>
    </citation>
    <scope>NUCLEOTIDE SEQUENCE [MRNA]</scope>
</reference>
<name>MAD3_RAT</name>
<accession>Q62912</accession>
<sequence>MEPVASNIQVLLQAAEFLERREREAEHGYASLCPHHSPGTVCRRRKAPLQAPGALNSGRHVHNELEKRRRAQLKRCLEQLRQQMPLGVDHTRYTTLSLLRGARMHIQKLEEQEQQAQRLKEKLRSRQQSLQQQLEQLQGLLGVRERDRLRADSLDSSGLSSERFDSDQEDLEVDVESLVFGTETELLQSFSAGQEHSYSHSTGTWL</sequence>
<dbReference type="EMBL" id="U45986">
    <property type="protein sequence ID" value="AAA91185.1"/>
    <property type="molecule type" value="mRNA"/>
</dbReference>
<dbReference type="RefSeq" id="NP_665716.1">
    <property type="nucleotide sequence ID" value="NM_145773.1"/>
</dbReference>
<dbReference type="SMR" id="Q62912"/>
<dbReference type="FunCoup" id="Q62912">
    <property type="interactions" value="122"/>
</dbReference>
<dbReference type="PhosphoSitePlus" id="Q62912"/>
<dbReference type="PaxDb" id="10116-ENSRNOP00000021946"/>
<dbReference type="GeneID" id="252915"/>
<dbReference type="KEGG" id="rno:252915"/>
<dbReference type="UCSC" id="RGD:628624">
    <property type="organism name" value="rat"/>
</dbReference>
<dbReference type="AGR" id="RGD:628624"/>
<dbReference type="CTD" id="83463"/>
<dbReference type="RGD" id="628624">
    <property type="gene designation" value="Mxd3"/>
</dbReference>
<dbReference type="eggNOG" id="KOG2483">
    <property type="taxonomic scope" value="Eukaryota"/>
</dbReference>
<dbReference type="InParanoid" id="Q62912"/>
<dbReference type="PhylomeDB" id="Q62912"/>
<dbReference type="PRO" id="PR:Q62912"/>
<dbReference type="Proteomes" id="UP000002494">
    <property type="component" value="Unplaced"/>
</dbReference>
<dbReference type="GO" id="GO:0090575">
    <property type="term" value="C:RNA polymerase II transcription regulator complex"/>
    <property type="evidence" value="ECO:0000266"/>
    <property type="project" value="RGD"/>
</dbReference>
<dbReference type="GO" id="GO:0000981">
    <property type="term" value="F:DNA-binding transcription factor activity, RNA polymerase II-specific"/>
    <property type="evidence" value="ECO:0000318"/>
    <property type="project" value="GO_Central"/>
</dbReference>
<dbReference type="GO" id="GO:0046983">
    <property type="term" value="F:protein dimerization activity"/>
    <property type="evidence" value="ECO:0007669"/>
    <property type="project" value="InterPro"/>
</dbReference>
<dbReference type="GO" id="GO:0000978">
    <property type="term" value="F:RNA polymerase II cis-regulatory region sequence-specific DNA binding"/>
    <property type="evidence" value="ECO:0000318"/>
    <property type="project" value="GO_Central"/>
</dbReference>
<dbReference type="GO" id="GO:0045892">
    <property type="term" value="P:negative regulation of DNA-templated transcription"/>
    <property type="evidence" value="ECO:0000266"/>
    <property type="project" value="RGD"/>
</dbReference>
<dbReference type="GO" id="GO:0000122">
    <property type="term" value="P:negative regulation of transcription by RNA polymerase II"/>
    <property type="evidence" value="ECO:0000266"/>
    <property type="project" value="RGD"/>
</dbReference>
<dbReference type="GO" id="GO:0006357">
    <property type="term" value="P:regulation of transcription by RNA polymerase II"/>
    <property type="evidence" value="ECO:0000318"/>
    <property type="project" value="GO_Central"/>
</dbReference>
<dbReference type="Gene3D" id="4.10.280.10">
    <property type="entry name" value="Helix-loop-helix DNA-binding domain"/>
    <property type="match status" value="1"/>
</dbReference>
<dbReference type="InterPro" id="IPR011598">
    <property type="entry name" value="bHLH_dom"/>
</dbReference>
<dbReference type="InterPro" id="IPR036638">
    <property type="entry name" value="HLH_DNA-bd_sf"/>
</dbReference>
<dbReference type="PANTHER" id="PTHR11969:SF6">
    <property type="entry name" value="MAX DIMERIZATION PROTEIN 3"/>
    <property type="match status" value="1"/>
</dbReference>
<dbReference type="PANTHER" id="PTHR11969">
    <property type="entry name" value="MAX DIMERIZATION, MAD"/>
    <property type="match status" value="1"/>
</dbReference>
<dbReference type="Pfam" id="PF00010">
    <property type="entry name" value="HLH"/>
    <property type="match status" value="1"/>
</dbReference>
<dbReference type="SMART" id="SM00353">
    <property type="entry name" value="HLH"/>
    <property type="match status" value="1"/>
</dbReference>
<dbReference type="SUPFAM" id="SSF47459">
    <property type="entry name" value="HLH, helix-loop-helix DNA-binding domain"/>
    <property type="match status" value="1"/>
</dbReference>
<dbReference type="PROSITE" id="PS50888">
    <property type="entry name" value="BHLH"/>
    <property type="match status" value="1"/>
</dbReference>
<organism>
    <name type="scientific">Rattus norvegicus</name>
    <name type="common">Rat</name>
    <dbReference type="NCBI Taxonomy" id="10116"/>
    <lineage>
        <taxon>Eukaryota</taxon>
        <taxon>Metazoa</taxon>
        <taxon>Chordata</taxon>
        <taxon>Craniata</taxon>
        <taxon>Vertebrata</taxon>
        <taxon>Euteleostomi</taxon>
        <taxon>Mammalia</taxon>
        <taxon>Eutheria</taxon>
        <taxon>Euarchontoglires</taxon>
        <taxon>Glires</taxon>
        <taxon>Rodentia</taxon>
        <taxon>Myomorpha</taxon>
        <taxon>Muroidea</taxon>
        <taxon>Muridae</taxon>
        <taxon>Murinae</taxon>
        <taxon>Rattus</taxon>
    </lineage>
</organism>
<protein>
    <recommendedName>
        <fullName>Max dimerization protein 3</fullName>
        <shortName>Max dimerizer 3</shortName>
    </recommendedName>
    <alternativeName>
        <fullName>Max-associated protein 3</fullName>
    </alternativeName>
    <alternativeName>
        <fullName>Max-interacting transcriptional repressor MAD3</fullName>
    </alternativeName>
    <alternativeName>
        <fullName>Myx</fullName>
    </alternativeName>
</protein>
<proteinExistence type="evidence at transcript level"/>
<comment type="function">
    <text evidence="1">Transcriptional repressor. Binds with MAX to form a sequence-specific DNA-binding protein complex which recognizes the core sequence 5'-CAC[GA]TG-3'. Antagonizes MYC transcriptional activity by competing for MAX and suppresses MYC dependent cell transformation (By similarity).</text>
</comment>
<comment type="subunit">
    <text evidence="1">Efficient DNA binding requires dimerization with another bHLH protein. Binds DNA as a heterodimer with MAX. Interacts with SIN3A AND SIN3B. Interacts with RNF17 (By similarity).</text>
</comment>
<comment type="subcellular location">
    <subcellularLocation>
        <location evidence="2">Nucleus</location>
    </subcellularLocation>
</comment>
<keyword id="KW-0238">DNA-binding</keyword>
<keyword id="KW-0539">Nucleus</keyword>
<keyword id="KW-1185">Reference proteome</keyword>
<keyword id="KW-0678">Repressor</keyword>
<keyword id="KW-0804">Transcription</keyword>
<keyword id="KW-0805">Transcription regulation</keyword>
<gene>
    <name type="primary">Mxd3</name>
    <name type="synonym">Mad3</name>
</gene>
<feature type="chain" id="PRO_0000253709" description="Max dimerization protein 3">
    <location>
        <begin position="1"/>
        <end position="206"/>
    </location>
</feature>
<feature type="domain" description="bHLH" evidence="2">
    <location>
        <begin position="57"/>
        <end position="109"/>
    </location>
</feature>
<feature type="region of interest" description="Interaction with SIN3A and SIN3B" evidence="1">
    <location>
        <begin position="8"/>
        <end position="25"/>
    </location>
</feature>